<name>VPN2_BPPHE</name>
<organismHost>
    <name type="scientific">Enterococcus faecalis</name>
    <name type="common">Streptococcus faecalis</name>
    <dbReference type="NCBI Taxonomy" id="1351"/>
</organismHost>
<evidence type="ECO:0000255" key="1"/>
<evidence type="ECO:0000269" key="2">
    <source>
    </source>
</evidence>
<evidence type="ECO:0000303" key="3">
    <source>
    </source>
</evidence>
<evidence type="ECO:0000305" key="4"/>
<evidence type="ECO:0000312" key="5">
    <source>
        <dbReference type="EMBL" id="BAF81284.1"/>
    </source>
</evidence>
<accession>P85226</accession>
<accession>A8E268</accession>
<reference evidence="5" key="1">
    <citation type="journal article" date="2008" name="Appl. Environ. Microbiol.">
        <title>In silico and in vivo evaluation of bacteriophage phiEF24C, a candidate for treatment of Enterococcus faecalis infections.</title>
        <authorList>
            <person name="Uchiyama J."/>
            <person name="Rashel M."/>
            <person name="Takemura I."/>
            <person name="Wakiguchi H."/>
            <person name="Matsuzaki S."/>
        </authorList>
    </citation>
    <scope>NUCLEOTIDE SEQUENCE [GENOMIC DNA]</scope>
</reference>
<reference evidence="4" key="2">
    <citation type="journal article" date="2008" name="FEMS Microbiol. Lett.">
        <title>Isolation and characterization of a novel Enterococcus faecalis bacteriophage phiEF24C as a therapeutic candidate.</title>
        <authorList>
            <person name="Uchiyama J."/>
            <person name="Rashel M."/>
            <person name="Maeda Y."/>
            <person name="Takemura I."/>
            <person name="Sugihara S."/>
            <person name="Akechi K."/>
            <person name="Muraoka A."/>
            <person name="Wakiguchi H."/>
            <person name="Matsuzaki S."/>
        </authorList>
    </citation>
    <scope>PROTEIN SEQUENCE OF 21-39</scope>
</reference>
<keyword id="KW-0903">Direct protein sequencing</keyword>
<keyword id="KW-1043">Host membrane</keyword>
<keyword id="KW-0472">Membrane</keyword>
<keyword id="KW-1185">Reference proteome</keyword>
<keyword id="KW-0812">Transmembrane</keyword>
<keyword id="KW-1133">Transmembrane helix</keyword>
<keyword id="KW-0946">Virion</keyword>
<protein>
    <recommendedName>
        <fullName evidence="3">Putative major capsid protein</fullName>
    </recommendedName>
</protein>
<proteinExistence type="evidence at protein level"/>
<organism>
    <name type="scientific">Enterococcus phage phiEF24C</name>
    <name type="common">Enterococcus bacteriophage phi-EF24C</name>
    <dbReference type="NCBI Taxonomy" id="442493"/>
    <lineage>
        <taxon>Viruses</taxon>
        <taxon>Duplodnaviria</taxon>
        <taxon>Heunggongvirae</taxon>
        <taxon>Uroviricota</taxon>
        <taxon>Caudoviricetes</taxon>
        <taxon>Herelleviridae</taxon>
        <taxon>Brockvirinae</taxon>
        <taxon>Kochikohdavirus</taxon>
        <taxon>Kochikohdavirus EF24C</taxon>
    </lineage>
</organism>
<sequence length="464" mass="51177">MTEKKNTERQLTSVQEEVIKGFTTGYGITPESQTDAAALRREFLDDQITMLTWADGDLSFYRDITKRPATSTVAKYDVYLAHGRVGHTRFTREIGVAPISDPNLRQKTVNMKYVSDTKNMSIATGLVNNIEDPMRILTDDAISVVAKTIEWASFYGDSDLSENPDAGSGLEFDGLAKLIDKHNVLDAKGASLTEALLNQASVLVGKGYGTPTDAYMPIGVQADFVNQQLDRQVQVISDNGQNATMGFNVKGFNSARGFIRLHGSTVMELEQILDENRMQLPNAPQKATVKATLEAGTKGKFRDEDLTIDTEYKVVVVSDDAESAPSDVASVVIDDKKKQVKLEITINNMYQARPQYVAIYRKGLETGLFYQIARVPASKAVEGVITFIDVNDEIPETADVFVGELTPSVVHLFELLPMMRLPLAQVNASVTFAVLWYGALALRAPKKWARIKNVKYIATGNVFN</sequence>
<feature type="propeptide" id="PRO_0000392575" evidence="2">
    <location>
        <begin position="1"/>
        <end position="20"/>
    </location>
</feature>
<feature type="chain" id="PRO_0000302096" description="Putative major capsid protein" evidence="2">
    <location>
        <begin position="21"/>
        <end position="464"/>
    </location>
</feature>
<feature type="transmembrane region" description="Helical" evidence="1">
    <location>
        <begin position="423"/>
        <end position="445"/>
    </location>
</feature>
<comment type="subcellular location">
    <subcellularLocation>
        <location evidence="1">Virion</location>
    </subcellularLocation>
    <subcellularLocation>
        <location evidence="1">Host membrane</location>
        <topology evidence="1">Single-pass membrane protein</topology>
    </subcellularLocation>
</comment>
<dbReference type="EMBL" id="AP009390">
    <property type="protein sequence ID" value="BAF81284.1"/>
    <property type="molecule type" value="Genomic_DNA"/>
</dbReference>
<dbReference type="RefSeq" id="YP_001504125.1">
    <property type="nucleotide sequence ID" value="NC_009904.1"/>
</dbReference>
<dbReference type="SMR" id="P85226"/>
<dbReference type="GeneID" id="5666484"/>
<dbReference type="KEGG" id="vg:5666484"/>
<dbReference type="OrthoDB" id="2213at10239"/>
<dbReference type="Proteomes" id="UP000001151">
    <property type="component" value="Genome"/>
</dbReference>
<dbReference type="GO" id="GO:0033644">
    <property type="term" value="C:host cell membrane"/>
    <property type="evidence" value="ECO:0007669"/>
    <property type="project" value="UniProtKB-SubCell"/>
</dbReference>
<dbReference type="GO" id="GO:0016020">
    <property type="term" value="C:membrane"/>
    <property type="evidence" value="ECO:0007669"/>
    <property type="project" value="UniProtKB-KW"/>
</dbReference>
<dbReference type="GO" id="GO:0044423">
    <property type="term" value="C:virion component"/>
    <property type="evidence" value="ECO:0007669"/>
    <property type="project" value="UniProtKB-KW"/>
</dbReference>